<feature type="chain" id="PRO_1000090823" description="Cysteine--tRNA ligase">
    <location>
        <begin position="1"/>
        <end position="465"/>
    </location>
</feature>
<feature type="short sequence motif" description="'HIGH' region">
    <location>
        <begin position="32"/>
        <end position="42"/>
    </location>
</feature>
<feature type="short sequence motif" description="'KMSKS' region">
    <location>
        <begin position="271"/>
        <end position="275"/>
    </location>
</feature>
<feature type="binding site" evidence="1">
    <location>
        <position position="30"/>
    </location>
    <ligand>
        <name>Zn(2+)</name>
        <dbReference type="ChEBI" id="CHEBI:29105"/>
    </ligand>
</feature>
<feature type="binding site" evidence="1">
    <location>
        <position position="214"/>
    </location>
    <ligand>
        <name>Zn(2+)</name>
        <dbReference type="ChEBI" id="CHEBI:29105"/>
    </ligand>
</feature>
<feature type="binding site" evidence="1">
    <location>
        <position position="239"/>
    </location>
    <ligand>
        <name>Zn(2+)</name>
        <dbReference type="ChEBI" id="CHEBI:29105"/>
    </ligand>
</feature>
<feature type="binding site" evidence="1">
    <location>
        <position position="243"/>
    </location>
    <ligand>
        <name>Zn(2+)</name>
        <dbReference type="ChEBI" id="CHEBI:29105"/>
    </ligand>
</feature>
<feature type="binding site" evidence="1">
    <location>
        <position position="274"/>
    </location>
    <ligand>
        <name>ATP</name>
        <dbReference type="ChEBI" id="CHEBI:30616"/>
    </ligand>
</feature>
<dbReference type="EC" id="6.1.1.16" evidence="1"/>
<dbReference type="EMBL" id="AM747720">
    <property type="protein sequence ID" value="CAR52452.1"/>
    <property type="molecule type" value="Genomic_DNA"/>
</dbReference>
<dbReference type="RefSeq" id="WP_006484007.1">
    <property type="nucleotide sequence ID" value="NC_011000.1"/>
</dbReference>
<dbReference type="SMR" id="B4ED73"/>
<dbReference type="KEGG" id="bcj:BCAL2150"/>
<dbReference type="eggNOG" id="COG0215">
    <property type="taxonomic scope" value="Bacteria"/>
</dbReference>
<dbReference type="HOGENOM" id="CLU_013528_0_1_4"/>
<dbReference type="BioCyc" id="BCEN216591:G1G1V-2362-MONOMER"/>
<dbReference type="Proteomes" id="UP000001035">
    <property type="component" value="Chromosome 1"/>
</dbReference>
<dbReference type="GO" id="GO:0005829">
    <property type="term" value="C:cytosol"/>
    <property type="evidence" value="ECO:0007669"/>
    <property type="project" value="TreeGrafter"/>
</dbReference>
<dbReference type="GO" id="GO:0005524">
    <property type="term" value="F:ATP binding"/>
    <property type="evidence" value="ECO:0007669"/>
    <property type="project" value="UniProtKB-UniRule"/>
</dbReference>
<dbReference type="GO" id="GO:0004817">
    <property type="term" value="F:cysteine-tRNA ligase activity"/>
    <property type="evidence" value="ECO:0007669"/>
    <property type="project" value="UniProtKB-UniRule"/>
</dbReference>
<dbReference type="GO" id="GO:0008270">
    <property type="term" value="F:zinc ion binding"/>
    <property type="evidence" value="ECO:0007669"/>
    <property type="project" value="UniProtKB-UniRule"/>
</dbReference>
<dbReference type="GO" id="GO:0006423">
    <property type="term" value="P:cysteinyl-tRNA aminoacylation"/>
    <property type="evidence" value="ECO:0007669"/>
    <property type="project" value="UniProtKB-UniRule"/>
</dbReference>
<dbReference type="CDD" id="cd07963">
    <property type="entry name" value="Anticodon_Ia_Cys"/>
    <property type="match status" value="1"/>
</dbReference>
<dbReference type="CDD" id="cd00672">
    <property type="entry name" value="CysRS_core"/>
    <property type="match status" value="1"/>
</dbReference>
<dbReference type="FunFam" id="3.40.50.620:FF:000009">
    <property type="entry name" value="Cysteine--tRNA ligase"/>
    <property type="match status" value="1"/>
</dbReference>
<dbReference type="Gene3D" id="1.20.120.1910">
    <property type="entry name" value="Cysteine-tRNA ligase, C-terminal anti-codon recognition domain"/>
    <property type="match status" value="1"/>
</dbReference>
<dbReference type="Gene3D" id="3.40.50.620">
    <property type="entry name" value="HUPs"/>
    <property type="match status" value="1"/>
</dbReference>
<dbReference type="HAMAP" id="MF_00041">
    <property type="entry name" value="Cys_tRNA_synth"/>
    <property type="match status" value="1"/>
</dbReference>
<dbReference type="InterPro" id="IPR015803">
    <property type="entry name" value="Cys-tRNA-ligase"/>
</dbReference>
<dbReference type="InterPro" id="IPR015273">
    <property type="entry name" value="Cys-tRNA-synt_Ia_DALR"/>
</dbReference>
<dbReference type="InterPro" id="IPR024909">
    <property type="entry name" value="Cys-tRNA/MSH_ligase"/>
</dbReference>
<dbReference type="InterPro" id="IPR056411">
    <property type="entry name" value="CysS_C"/>
</dbReference>
<dbReference type="InterPro" id="IPR014729">
    <property type="entry name" value="Rossmann-like_a/b/a_fold"/>
</dbReference>
<dbReference type="InterPro" id="IPR032678">
    <property type="entry name" value="tRNA-synt_1_cat_dom"/>
</dbReference>
<dbReference type="InterPro" id="IPR009080">
    <property type="entry name" value="tRNAsynth_Ia_anticodon-bd"/>
</dbReference>
<dbReference type="NCBIfam" id="TIGR00435">
    <property type="entry name" value="cysS"/>
    <property type="match status" value="1"/>
</dbReference>
<dbReference type="PANTHER" id="PTHR10890:SF3">
    <property type="entry name" value="CYSTEINE--TRNA LIGASE, CYTOPLASMIC"/>
    <property type="match status" value="1"/>
</dbReference>
<dbReference type="PANTHER" id="PTHR10890">
    <property type="entry name" value="CYSTEINYL-TRNA SYNTHETASE"/>
    <property type="match status" value="1"/>
</dbReference>
<dbReference type="Pfam" id="PF23493">
    <property type="entry name" value="CysS_C"/>
    <property type="match status" value="1"/>
</dbReference>
<dbReference type="Pfam" id="PF09190">
    <property type="entry name" value="DALR_2"/>
    <property type="match status" value="1"/>
</dbReference>
<dbReference type="Pfam" id="PF01406">
    <property type="entry name" value="tRNA-synt_1e"/>
    <property type="match status" value="1"/>
</dbReference>
<dbReference type="PRINTS" id="PR00983">
    <property type="entry name" value="TRNASYNTHCYS"/>
</dbReference>
<dbReference type="SMART" id="SM00840">
    <property type="entry name" value="DALR_2"/>
    <property type="match status" value="1"/>
</dbReference>
<dbReference type="SUPFAM" id="SSF47323">
    <property type="entry name" value="Anticodon-binding domain of a subclass of class I aminoacyl-tRNA synthetases"/>
    <property type="match status" value="1"/>
</dbReference>
<dbReference type="SUPFAM" id="SSF52374">
    <property type="entry name" value="Nucleotidylyl transferase"/>
    <property type="match status" value="1"/>
</dbReference>
<reference key="1">
    <citation type="journal article" date="2009" name="J. Bacteriol.">
        <title>The genome of Burkholderia cenocepacia J2315, an epidemic pathogen of cystic fibrosis patients.</title>
        <authorList>
            <person name="Holden M.T."/>
            <person name="Seth-Smith H.M."/>
            <person name="Crossman L.C."/>
            <person name="Sebaihia M."/>
            <person name="Bentley S.D."/>
            <person name="Cerdeno-Tarraga A.M."/>
            <person name="Thomson N.R."/>
            <person name="Bason N."/>
            <person name="Quail M.A."/>
            <person name="Sharp S."/>
            <person name="Cherevach I."/>
            <person name="Churcher C."/>
            <person name="Goodhead I."/>
            <person name="Hauser H."/>
            <person name="Holroyd N."/>
            <person name="Mungall K."/>
            <person name="Scott P."/>
            <person name="Walker D."/>
            <person name="White B."/>
            <person name="Rose H."/>
            <person name="Iversen P."/>
            <person name="Mil-Homens D."/>
            <person name="Rocha E.P."/>
            <person name="Fialho A.M."/>
            <person name="Baldwin A."/>
            <person name="Dowson C."/>
            <person name="Barrell B.G."/>
            <person name="Govan J.R."/>
            <person name="Vandamme P."/>
            <person name="Hart C.A."/>
            <person name="Mahenthiralingam E."/>
            <person name="Parkhill J."/>
        </authorList>
    </citation>
    <scope>NUCLEOTIDE SEQUENCE [LARGE SCALE GENOMIC DNA]</scope>
    <source>
        <strain>ATCC BAA-245 / DSM 16553 / LMG 16656 / NCTC 13227 / J2315 / CF5610</strain>
    </source>
</reference>
<name>SYC_BURCJ</name>
<proteinExistence type="inferred from homology"/>
<sequence length="465" mass="52136">MESLRIYNTLARDKQVFVPRQSGEVRMYVCGITVYDYCHVGHARMLVVFDLVQRWLRAIGYRVTYVRNITDIDDKIIRRAVENGETIKSLTDRFIGAMHEDESALGIQRPDIEPRATQFIPQMLGMIETLETNGYAYQASDGDVNYSVRKFTNYGKLSGKSLDDLRAGERVAANDAKEDPLDFVLWKRAKPEDPEGASWASKYGMGRPGWHIECSAMGCSLLGNHFDIHGGGQDLQFPHHENEIAQSEGATGETFVNYWMHNGFVQVDNEKMSKSLGNFFTIREVLERYDAEVMRFFIVRTHYRSPLNYSDVHLDDARASLTRLYTALKDVDADTLALDWNEPHAQRFAAAMNDDFNTPVAVATLFELAGEVNRTRDASLARQLKQLAGLLGLLGREPRAFLQQASGAAQAGGLAADEIEAKIAARVAAKQAKDYAEADRIRAELLEAGIALEDKPGGSTEWRRV</sequence>
<protein>
    <recommendedName>
        <fullName evidence="1">Cysteine--tRNA ligase</fullName>
        <ecNumber evidence="1">6.1.1.16</ecNumber>
    </recommendedName>
    <alternativeName>
        <fullName evidence="1">Cysteinyl-tRNA synthetase</fullName>
        <shortName evidence="1">CysRS</shortName>
    </alternativeName>
</protein>
<accession>B4ED73</accession>
<organism>
    <name type="scientific">Burkholderia cenocepacia (strain ATCC BAA-245 / DSM 16553 / LMG 16656 / NCTC 13227 / J2315 / CF5610)</name>
    <name type="common">Burkholderia cepacia (strain J2315)</name>
    <dbReference type="NCBI Taxonomy" id="216591"/>
    <lineage>
        <taxon>Bacteria</taxon>
        <taxon>Pseudomonadati</taxon>
        <taxon>Pseudomonadota</taxon>
        <taxon>Betaproteobacteria</taxon>
        <taxon>Burkholderiales</taxon>
        <taxon>Burkholderiaceae</taxon>
        <taxon>Burkholderia</taxon>
        <taxon>Burkholderia cepacia complex</taxon>
    </lineage>
</organism>
<gene>
    <name evidence="1" type="primary">cysS</name>
    <name type="ordered locus">BceJ2315_21140</name>
    <name type="ORF">BCAL2150</name>
</gene>
<evidence type="ECO:0000255" key="1">
    <source>
        <dbReference type="HAMAP-Rule" id="MF_00041"/>
    </source>
</evidence>
<keyword id="KW-0030">Aminoacyl-tRNA synthetase</keyword>
<keyword id="KW-0067">ATP-binding</keyword>
<keyword id="KW-0963">Cytoplasm</keyword>
<keyword id="KW-0436">Ligase</keyword>
<keyword id="KW-0479">Metal-binding</keyword>
<keyword id="KW-0547">Nucleotide-binding</keyword>
<keyword id="KW-0648">Protein biosynthesis</keyword>
<keyword id="KW-0862">Zinc</keyword>
<comment type="catalytic activity">
    <reaction evidence="1">
        <text>tRNA(Cys) + L-cysteine + ATP = L-cysteinyl-tRNA(Cys) + AMP + diphosphate</text>
        <dbReference type="Rhea" id="RHEA:17773"/>
        <dbReference type="Rhea" id="RHEA-COMP:9661"/>
        <dbReference type="Rhea" id="RHEA-COMP:9679"/>
        <dbReference type="ChEBI" id="CHEBI:30616"/>
        <dbReference type="ChEBI" id="CHEBI:33019"/>
        <dbReference type="ChEBI" id="CHEBI:35235"/>
        <dbReference type="ChEBI" id="CHEBI:78442"/>
        <dbReference type="ChEBI" id="CHEBI:78517"/>
        <dbReference type="ChEBI" id="CHEBI:456215"/>
        <dbReference type="EC" id="6.1.1.16"/>
    </reaction>
</comment>
<comment type="cofactor">
    <cofactor evidence="1">
        <name>Zn(2+)</name>
        <dbReference type="ChEBI" id="CHEBI:29105"/>
    </cofactor>
    <text evidence="1">Binds 1 zinc ion per subunit.</text>
</comment>
<comment type="subunit">
    <text evidence="1">Monomer.</text>
</comment>
<comment type="subcellular location">
    <subcellularLocation>
        <location evidence="1">Cytoplasm</location>
    </subcellularLocation>
</comment>
<comment type="similarity">
    <text evidence="1">Belongs to the class-I aminoacyl-tRNA synthetase family.</text>
</comment>